<accession>F4IPY2</accession>
<accession>O82267</accession>
<accession>Q0WLQ1</accession>
<accession>Q93VX6</accession>
<keyword id="KW-0025">Alternative splicing</keyword>
<keyword id="KW-0030">Aminoacyl-tRNA synthetase</keyword>
<keyword id="KW-0067">ATP-binding</keyword>
<keyword id="KW-0150">Chloroplast</keyword>
<keyword id="KW-0436">Ligase</keyword>
<keyword id="KW-0479">Metal-binding</keyword>
<keyword id="KW-0496">Mitochondrion</keyword>
<keyword id="KW-0547">Nucleotide-binding</keyword>
<keyword id="KW-0934">Plastid</keyword>
<keyword id="KW-0648">Protein biosynthesis</keyword>
<keyword id="KW-1185">Reference proteome</keyword>
<keyword id="KW-0809">Transit peptide</keyword>
<keyword id="KW-0862">Zinc</keyword>
<protein>
    <recommendedName>
        <fullName evidence="8">Cysteine--tRNA ligase, chloroplastic/mitochondrial</fullName>
        <ecNumber evidence="8">6.1.1.16</ecNumber>
    </recommendedName>
    <alternativeName>
        <fullName evidence="8">Cysteinyl-tRNA synthetase</fullName>
        <shortName evidence="8">CysRS</shortName>
    </alternativeName>
</protein>
<name>SYCM_ARATH</name>
<feature type="transit peptide" description="Chloroplast and mitochondrion" evidence="8">
    <location>
        <begin position="1"/>
        <end status="unknown"/>
    </location>
</feature>
<feature type="chain" id="PRO_0000433558" description="Cysteine--tRNA ligase, chloroplastic/mitochondrial" evidence="8">
    <location>
        <begin status="unknown"/>
        <end position="563"/>
    </location>
</feature>
<feature type="short sequence motif" description="'HIGH' region" evidence="8">
    <location>
        <begin position="93"/>
        <end position="103"/>
    </location>
</feature>
<feature type="short sequence motif" description="'KIIK' region">
    <location>
        <begin position="136"/>
        <end position="139"/>
    </location>
</feature>
<feature type="short sequence motif" description="'KMSKS' region" evidence="8">
    <location>
        <begin position="328"/>
        <end position="332"/>
    </location>
</feature>
<feature type="binding site" evidence="2">
    <location>
        <position position="91"/>
    </location>
    <ligand>
        <name>Zn(2+)</name>
        <dbReference type="ChEBI" id="CHEBI:29105"/>
    </ligand>
</feature>
<feature type="binding site" evidence="2">
    <location>
        <position position="92"/>
    </location>
    <ligand>
        <name>L-cysteine</name>
        <dbReference type="ChEBI" id="CHEBI:35235"/>
    </ligand>
</feature>
<feature type="binding site" evidence="2">
    <location>
        <position position="131"/>
    </location>
    <ligand>
        <name>L-cysteine</name>
        <dbReference type="ChEBI" id="CHEBI:35235"/>
    </ligand>
</feature>
<feature type="binding site" evidence="2">
    <location>
        <position position="271"/>
    </location>
    <ligand>
        <name>Zn(2+)</name>
        <dbReference type="ChEBI" id="CHEBI:29105"/>
    </ligand>
</feature>
<feature type="binding site" evidence="2">
    <location>
        <position position="296"/>
    </location>
    <ligand>
        <name>L-cysteine</name>
        <dbReference type="ChEBI" id="CHEBI:35235"/>
    </ligand>
</feature>
<feature type="binding site" evidence="2">
    <location>
        <position position="296"/>
    </location>
    <ligand>
        <name>Zn(2+)</name>
        <dbReference type="ChEBI" id="CHEBI:29105"/>
    </ligand>
</feature>
<feature type="binding site" evidence="2">
    <location>
        <position position="300"/>
    </location>
    <ligand>
        <name>Zn(2+)</name>
        <dbReference type="ChEBI" id="CHEBI:29105"/>
    </ligand>
</feature>
<feature type="binding site" evidence="1">
    <location>
        <position position="331"/>
    </location>
    <ligand>
        <name>ATP</name>
        <dbReference type="ChEBI" id="CHEBI:30616"/>
    </ligand>
</feature>
<comment type="function">
    <text evidence="5">Required for female gametophyte development. Is necessary for the fusion of central cell nuclei and programmed cell death (PCD) of the antipodals.</text>
</comment>
<comment type="catalytic activity">
    <reaction evidence="3">
        <text>tRNA(Cys) + L-cysteine + ATP = L-cysteinyl-tRNA(Cys) + AMP + diphosphate</text>
        <dbReference type="Rhea" id="RHEA:17773"/>
        <dbReference type="Rhea" id="RHEA-COMP:9661"/>
        <dbReference type="Rhea" id="RHEA-COMP:9679"/>
        <dbReference type="ChEBI" id="CHEBI:30616"/>
        <dbReference type="ChEBI" id="CHEBI:33019"/>
        <dbReference type="ChEBI" id="CHEBI:35235"/>
        <dbReference type="ChEBI" id="CHEBI:78442"/>
        <dbReference type="ChEBI" id="CHEBI:78517"/>
        <dbReference type="ChEBI" id="CHEBI:456215"/>
        <dbReference type="EC" id="6.1.1.16"/>
    </reaction>
    <physiologicalReaction direction="right-to-left" evidence="3">
        <dbReference type="Rhea" id="RHEA:17775"/>
    </physiologicalReaction>
</comment>
<comment type="cofactor">
    <cofactor evidence="2">
        <name>Zn(2+)</name>
        <dbReference type="ChEBI" id="CHEBI:29105"/>
    </cofactor>
    <text evidence="2">Binds 1 zinc ion per subunit.</text>
</comment>
<comment type="subcellular location">
    <subcellularLocation>
        <location evidence="4">Plastid</location>
        <location evidence="4">Chloroplast</location>
    </subcellularLocation>
    <subcellularLocation>
        <location evidence="4 5">Mitochondrion</location>
    </subcellularLocation>
</comment>
<comment type="alternative products">
    <event type="alternative splicing"/>
    <isoform>
        <id>F4IPY2-1</id>
        <name>1</name>
        <sequence type="displayed"/>
    </isoform>
    <text evidence="8">A number of isoforms are produced. According to EST sequences.</text>
</comment>
<comment type="disruption phenotype">
    <text evidence="5">Embryonic lethality when homozygous.</text>
</comment>
<comment type="similarity">
    <text evidence="8">Belongs to the class-I aminoacyl-tRNA synthetase family.</text>
</comment>
<comment type="sequence caution" evidence="8">
    <conflict type="erroneous initiation">
        <sequence resource="EMBL-CDS" id="AAD20662"/>
    </conflict>
    <text>Truncated N-terminus.</text>
</comment>
<comment type="sequence caution" evidence="8">
    <conflict type="erroneous initiation">
        <sequence resource="EMBL-CDS" id="AAK43958"/>
    </conflict>
    <text>Truncated N-terminus.</text>
</comment>
<comment type="sequence caution" evidence="8">
    <conflict type="erroneous initiation">
        <sequence resource="EMBL-CDS" id="AAM15026"/>
    </conflict>
    <text>Truncated N-terminus.</text>
</comment>
<evidence type="ECO:0000250" key="1"/>
<evidence type="ECO:0000250" key="2">
    <source>
        <dbReference type="UniProtKB" id="P21888"/>
    </source>
</evidence>
<evidence type="ECO:0000250" key="3">
    <source>
        <dbReference type="UniProtKB" id="Q9HA77"/>
    </source>
</evidence>
<evidence type="ECO:0000269" key="4">
    <source>
    </source>
</evidence>
<evidence type="ECO:0000269" key="5">
    <source>
    </source>
</evidence>
<evidence type="ECO:0000303" key="6">
    <source>
    </source>
</evidence>
<evidence type="ECO:0000303" key="7">
    <source>
    </source>
</evidence>
<evidence type="ECO:0000305" key="8"/>
<evidence type="ECO:0000312" key="9">
    <source>
        <dbReference type="Araport" id="AT2G31170"/>
    </source>
</evidence>
<sequence>MASSVLNLFKSCRPFTPIRFSSLPKSQFRIQFPLRPGKETQLRRCFTTLSSLTDGGAPISGGKELWLHNTMSRKKELFKPKVEGKVGMYVCGVTAYDLSHIGHARVYVTFDVLLRYLKHLGYEVSYVRNFTDVDDKIIARAKELEEDPISLSRRFCEEFNRDMEQLQCLDPSVQPRVSDHIPQIIDLIKQILDNGYAYKVDGDIYFSVDKFPTYGKLSGRKLEDNRAGERVAVDTRKKHPADFALWKAAKEGEPFWESPWGRGRPGWHIECSAMSAAYLGYSFDIHGGGMDLVFPHHENEIAQSCAACDSSNISYWIHNGFVTVDSEKMSKSLGNFFTIRQVIDLYHPLALRLFLMGTHYRSPINYSDFLLESASERIFYIYQTLHDCESALGEKDSTFENGSVPSDTLTSINTFRTEFVASMSDDLLTPVTLAAMSEPLKTINDLIHTRKGKKQARREESLKALETTIRDVLTILGLMPTSYSEVLEQLKEKALKRAGLKEEDVLQRVQERTDARKNKEYERSDAIRKDLAKVGIALMDSPEGTTWRPAIPLALQEPVTTTP</sequence>
<proteinExistence type="evidence at transcript level"/>
<dbReference type="EC" id="6.1.1.16" evidence="8"/>
<dbReference type="EMBL" id="AC005311">
    <property type="protein sequence ID" value="AAM15026.1"/>
    <property type="status" value="ALT_INIT"/>
    <property type="molecule type" value="Genomic_DNA"/>
</dbReference>
<dbReference type="EMBL" id="AC006593">
    <property type="protein sequence ID" value="AAD20662.2"/>
    <property type="status" value="ALT_INIT"/>
    <property type="molecule type" value="Genomic_DNA"/>
</dbReference>
<dbReference type="EMBL" id="CP002685">
    <property type="protein sequence ID" value="AEC08502.1"/>
    <property type="molecule type" value="Genomic_DNA"/>
</dbReference>
<dbReference type="EMBL" id="AF370143">
    <property type="protein sequence ID" value="AAK43958.1"/>
    <property type="status" value="ALT_INIT"/>
    <property type="molecule type" value="mRNA"/>
</dbReference>
<dbReference type="EMBL" id="AY051059">
    <property type="protein sequence ID" value="AAK93736.1"/>
    <property type="molecule type" value="mRNA"/>
</dbReference>
<dbReference type="EMBL" id="AK230142">
    <property type="protein sequence ID" value="BAF01956.1"/>
    <property type="molecule type" value="mRNA"/>
</dbReference>
<dbReference type="PIR" id="D84717">
    <property type="entry name" value="D84717"/>
</dbReference>
<dbReference type="RefSeq" id="NP_565717.2">
    <molecule id="F4IPY2-1"/>
    <property type="nucleotide sequence ID" value="NM_128673.5"/>
</dbReference>
<dbReference type="SMR" id="F4IPY2"/>
<dbReference type="FunCoup" id="F4IPY2">
    <property type="interactions" value="4051"/>
</dbReference>
<dbReference type="STRING" id="3702.F4IPY2"/>
<dbReference type="iPTMnet" id="F4IPY2"/>
<dbReference type="PaxDb" id="3702-AT2G31170.1"/>
<dbReference type="ProteomicsDB" id="233039">
    <molecule id="F4IPY2-1"/>
</dbReference>
<dbReference type="EnsemblPlants" id="AT2G31170.1">
    <molecule id="F4IPY2-1"/>
    <property type="protein sequence ID" value="AT2G31170.1"/>
    <property type="gene ID" value="AT2G31170"/>
</dbReference>
<dbReference type="GeneID" id="817673"/>
<dbReference type="Gramene" id="AT2G31170.1">
    <molecule id="F4IPY2-1"/>
    <property type="protein sequence ID" value="AT2G31170.1"/>
    <property type="gene ID" value="AT2G31170"/>
</dbReference>
<dbReference type="KEGG" id="ath:AT2G31170"/>
<dbReference type="Araport" id="AT2G31170"/>
<dbReference type="TAIR" id="AT2G31170">
    <property type="gene designation" value="SYCO ARATH"/>
</dbReference>
<dbReference type="eggNOG" id="KOG2007">
    <property type="taxonomic scope" value="Eukaryota"/>
</dbReference>
<dbReference type="HOGENOM" id="CLU_013528_0_1_1"/>
<dbReference type="InParanoid" id="F4IPY2"/>
<dbReference type="OMA" id="IMRWPSP"/>
<dbReference type="OrthoDB" id="438179at2759"/>
<dbReference type="PRO" id="PR:F4IPY2"/>
<dbReference type="Proteomes" id="UP000006548">
    <property type="component" value="Chromosome 2"/>
</dbReference>
<dbReference type="ExpressionAtlas" id="F4IPY2">
    <property type="expression patterns" value="baseline and differential"/>
</dbReference>
<dbReference type="GO" id="GO:0009507">
    <property type="term" value="C:chloroplast"/>
    <property type="evidence" value="ECO:0000314"/>
    <property type="project" value="TAIR"/>
</dbReference>
<dbReference type="GO" id="GO:0009570">
    <property type="term" value="C:chloroplast stroma"/>
    <property type="evidence" value="ECO:0007005"/>
    <property type="project" value="TAIR"/>
</dbReference>
<dbReference type="GO" id="GO:0005739">
    <property type="term" value="C:mitochondrion"/>
    <property type="evidence" value="ECO:0000314"/>
    <property type="project" value="TAIR"/>
</dbReference>
<dbReference type="GO" id="GO:0005524">
    <property type="term" value="F:ATP binding"/>
    <property type="evidence" value="ECO:0007669"/>
    <property type="project" value="UniProtKB-KW"/>
</dbReference>
<dbReference type="GO" id="GO:0004817">
    <property type="term" value="F:cysteine-tRNA ligase activity"/>
    <property type="evidence" value="ECO:0007669"/>
    <property type="project" value="UniProtKB-EC"/>
</dbReference>
<dbReference type="GO" id="GO:0046872">
    <property type="term" value="F:metal ion binding"/>
    <property type="evidence" value="ECO:0007669"/>
    <property type="project" value="UniProtKB-KW"/>
</dbReference>
<dbReference type="GO" id="GO:0042407">
    <property type="term" value="P:cristae formation"/>
    <property type="evidence" value="ECO:0000315"/>
    <property type="project" value="TAIR"/>
</dbReference>
<dbReference type="GO" id="GO:0006423">
    <property type="term" value="P:cysteinyl-tRNA aminoacylation"/>
    <property type="evidence" value="ECO:0007669"/>
    <property type="project" value="InterPro"/>
</dbReference>
<dbReference type="GO" id="GO:0010197">
    <property type="term" value="P:polar nucleus fusion"/>
    <property type="evidence" value="ECO:0000315"/>
    <property type="project" value="TAIR"/>
</dbReference>
<dbReference type="GO" id="GO:0043067">
    <property type="term" value="P:regulation of programmed cell death"/>
    <property type="evidence" value="ECO:0000315"/>
    <property type="project" value="TAIR"/>
</dbReference>
<dbReference type="CDD" id="cd00672">
    <property type="entry name" value="CysRS_core"/>
    <property type="match status" value="1"/>
</dbReference>
<dbReference type="FunFam" id="3.40.50.620:FF:000009">
    <property type="entry name" value="Cysteine--tRNA ligase"/>
    <property type="match status" value="1"/>
</dbReference>
<dbReference type="FunFam" id="1.20.120.1910:FF:000003">
    <property type="entry name" value="Cysteine--tRNA ligase CPS1, chloroplastic/mitochondrial"/>
    <property type="match status" value="1"/>
</dbReference>
<dbReference type="Gene3D" id="1.20.120.1910">
    <property type="entry name" value="Cysteine-tRNA ligase, C-terminal anti-codon recognition domain"/>
    <property type="match status" value="1"/>
</dbReference>
<dbReference type="Gene3D" id="3.40.50.620">
    <property type="entry name" value="HUPs"/>
    <property type="match status" value="1"/>
</dbReference>
<dbReference type="HAMAP" id="MF_00041">
    <property type="entry name" value="Cys_tRNA_synth"/>
    <property type="match status" value="1"/>
</dbReference>
<dbReference type="InterPro" id="IPR015803">
    <property type="entry name" value="Cys-tRNA-ligase"/>
</dbReference>
<dbReference type="InterPro" id="IPR024909">
    <property type="entry name" value="Cys-tRNA/MSH_ligase"/>
</dbReference>
<dbReference type="InterPro" id="IPR056411">
    <property type="entry name" value="CysS_C"/>
</dbReference>
<dbReference type="InterPro" id="IPR014729">
    <property type="entry name" value="Rossmann-like_a/b/a_fold"/>
</dbReference>
<dbReference type="InterPro" id="IPR032678">
    <property type="entry name" value="tRNA-synt_1_cat_dom"/>
</dbReference>
<dbReference type="InterPro" id="IPR009080">
    <property type="entry name" value="tRNAsynth_Ia_anticodon-bd"/>
</dbReference>
<dbReference type="NCBIfam" id="TIGR00435">
    <property type="entry name" value="cysS"/>
    <property type="match status" value="1"/>
</dbReference>
<dbReference type="PANTHER" id="PTHR10890:SF25">
    <property type="entry name" value="CYSTEINE--TRNA LIGASE, CHLOROPLASTIC_MITOCHONDRIAL"/>
    <property type="match status" value="1"/>
</dbReference>
<dbReference type="PANTHER" id="PTHR10890">
    <property type="entry name" value="CYSTEINYL-TRNA SYNTHETASE"/>
    <property type="match status" value="1"/>
</dbReference>
<dbReference type="Pfam" id="PF23493">
    <property type="entry name" value="CysS_C"/>
    <property type="match status" value="1"/>
</dbReference>
<dbReference type="Pfam" id="PF01406">
    <property type="entry name" value="tRNA-synt_1e"/>
    <property type="match status" value="1"/>
</dbReference>
<dbReference type="PRINTS" id="PR00983">
    <property type="entry name" value="TRNASYNTHCYS"/>
</dbReference>
<dbReference type="SUPFAM" id="SSF47323">
    <property type="entry name" value="Anticodon-binding domain of a subclass of class I aminoacyl-tRNA synthetases"/>
    <property type="match status" value="1"/>
</dbReference>
<dbReference type="SUPFAM" id="SSF52374">
    <property type="entry name" value="Nucleotidylyl transferase"/>
    <property type="match status" value="1"/>
</dbReference>
<organism>
    <name type="scientific">Arabidopsis thaliana</name>
    <name type="common">Mouse-ear cress</name>
    <dbReference type="NCBI Taxonomy" id="3702"/>
    <lineage>
        <taxon>Eukaryota</taxon>
        <taxon>Viridiplantae</taxon>
        <taxon>Streptophyta</taxon>
        <taxon>Embryophyta</taxon>
        <taxon>Tracheophyta</taxon>
        <taxon>Spermatophyta</taxon>
        <taxon>Magnoliopsida</taxon>
        <taxon>eudicotyledons</taxon>
        <taxon>Gunneridae</taxon>
        <taxon>Pentapetalae</taxon>
        <taxon>rosids</taxon>
        <taxon>malvids</taxon>
        <taxon>Brassicales</taxon>
        <taxon>Brassicaceae</taxon>
        <taxon>Camelineae</taxon>
        <taxon>Arabidopsis</taxon>
    </lineage>
</organism>
<gene>
    <name evidence="6" type="primary">SYCO</name>
    <name evidence="7" type="synonym">FIONA</name>
    <name evidence="9" type="ordered locus">At2g31170</name>
</gene>
<reference key="1">
    <citation type="journal article" date="1999" name="Nature">
        <title>Sequence and analysis of chromosome 2 of the plant Arabidopsis thaliana.</title>
        <authorList>
            <person name="Lin X."/>
            <person name="Kaul S."/>
            <person name="Rounsley S.D."/>
            <person name="Shea T.P."/>
            <person name="Benito M.-I."/>
            <person name="Town C.D."/>
            <person name="Fujii C.Y."/>
            <person name="Mason T.M."/>
            <person name="Bowman C.L."/>
            <person name="Barnstead M.E."/>
            <person name="Feldblyum T.V."/>
            <person name="Buell C.R."/>
            <person name="Ketchum K.A."/>
            <person name="Lee J.J."/>
            <person name="Ronning C.M."/>
            <person name="Koo H.L."/>
            <person name="Moffat K.S."/>
            <person name="Cronin L.A."/>
            <person name="Shen M."/>
            <person name="Pai G."/>
            <person name="Van Aken S."/>
            <person name="Umayam L."/>
            <person name="Tallon L.J."/>
            <person name="Gill J.E."/>
            <person name="Adams M.D."/>
            <person name="Carrera A.J."/>
            <person name="Creasy T.H."/>
            <person name="Goodman H.M."/>
            <person name="Somerville C.R."/>
            <person name="Copenhaver G.P."/>
            <person name="Preuss D."/>
            <person name="Nierman W.C."/>
            <person name="White O."/>
            <person name="Eisen J.A."/>
            <person name="Salzberg S.L."/>
            <person name="Fraser C.M."/>
            <person name="Venter J.C."/>
        </authorList>
    </citation>
    <scope>NUCLEOTIDE SEQUENCE [LARGE SCALE GENOMIC DNA]</scope>
    <source>
        <strain>cv. Columbia</strain>
    </source>
</reference>
<reference key="2">
    <citation type="journal article" date="2017" name="Plant J.">
        <title>Araport11: a complete reannotation of the Arabidopsis thaliana reference genome.</title>
        <authorList>
            <person name="Cheng C.Y."/>
            <person name="Krishnakumar V."/>
            <person name="Chan A.P."/>
            <person name="Thibaud-Nissen F."/>
            <person name="Schobel S."/>
            <person name="Town C.D."/>
        </authorList>
    </citation>
    <scope>GENOME REANNOTATION</scope>
    <source>
        <strain>cv. Columbia</strain>
    </source>
</reference>
<reference key="3">
    <citation type="journal article" date="2003" name="Science">
        <title>Empirical analysis of transcriptional activity in the Arabidopsis genome.</title>
        <authorList>
            <person name="Yamada K."/>
            <person name="Lim J."/>
            <person name="Dale J.M."/>
            <person name="Chen H."/>
            <person name="Shinn P."/>
            <person name="Palm C.J."/>
            <person name="Southwick A.M."/>
            <person name="Wu H.C."/>
            <person name="Kim C.J."/>
            <person name="Nguyen M."/>
            <person name="Pham P.K."/>
            <person name="Cheuk R.F."/>
            <person name="Karlin-Newmann G."/>
            <person name="Liu S.X."/>
            <person name="Lam B."/>
            <person name="Sakano H."/>
            <person name="Wu T."/>
            <person name="Yu G."/>
            <person name="Miranda M."/>
            <person name="Quach H.L."/>
            <person name="Tripp M."/>
            <person name="Chang C.H."/>
            <person name="Lee J.M."/>
            <person name="Toriumi M.J."/>
            <person name="Chan M.M."/>
            <person name="Tang C.C."/>
            <person name="Onodera C.S."/>
            <person name="Deng J.M."/>
            <person name="Akiyama K."/>
            <person name="Ansari Y."/>
            <person name="Arakawa T."/>
            <person name="Banh J."/>
            <person name="Banno F."/>
            <person name="Bowser L."/>
            <person name="Brooks S.Y."/>
            <person name="Carninci P."/>
            <person name="Chao Q."/>
            <person name="Choy N."/>
            <person name="Enju A."/>
            <person name="Goldsmith A.D."/>
            <person name="Gurjal M."/>
            <person name="Hansen N.F."/>
            <person name="Hayashizaki Y."/>
            <person name="Johnson-Hopson C."/>
            <person name="Hsuan V.W."/>
            <person name="Iida K."/>
            <person name="Karnes M."/>
            <person name="Khan S."/>
            <person name="Koesema E."/>
            <person name="Ishida J."/>
            <person name="Jiang P.X."/>
            <person name="Jones T."/>
            <person name="Kawai J."/>
            <person name="Kamiya A."/>
            <person name="Meyers C."/>
            <person name="Nakajima M."/>
            <person name="Narusaka M."/>
            <person name="Seki M."/>
            <person name="Sakurai T."/>
            <person name="Satou M."/>
            <person name="Tamse R."/>
            <person name="Vaysberg M."/>
            <person name="Wallender E.K."/>
            <person name="Wong C."/>
            <person name="Yamamura Y."/>
            <person name="Yuan S."/>
            <person name="Shinozaki K."/>
            <person name="Davis R.W."/>
            <person name="Theologis A."/>
            <person name="Ecker J.R."/>
        </authorList>
    </citation>
    <scope>NUCLEOTIDE SEQUENCE [LARGE SCALE MRNA] OF 7-563 AND 71-563</scope>
    <source>
        <strain>cv. Columbia</strain>
    </source>
</reference>
<reference key="4">
    <citation type="submission" date="2006-07" db="EMBL/GenBank/DDBJ databases">
        <title>Large-scale analysis of RIKEN Arabidopsis full-length (RAFL) cDNAs.</title>
        <authorList>
            <person name="Totoki Y."/>
            <person name="Seki M."/>
            <person name="Ishida J."/>
            <person name="Nakajima M."/>
            <person name="Enju A."/>
            <person name="Kamiya A."/>
            <person name="Narusaka M."/>
            <person name="Shin-i T."/>
            <person name="Nakagawa M."/>
            <person name="Sakamoto N."/>
            <person name="Oishi K."/>
            <person name="Kohara Y."/>
            <person name="Kobayashi M."/>
            <person name="Toyoda A."/>
            <person name="Sakaki Y."/>
            <person name="Sakurai T."/>
            <person name="Iida K."/>
            <person name="Akiyama K."/>
            <person name="Satou M."/>
            <person name="Toyoda T."/>
            <person name="Konagaya A."/>
            <person name="Carninci P."/>
            <person name="Kawai J."/>
            <person name="Hayashizaki Y."/>
            <person name="Shinozaki K."/>
        </authorList>
    </citation>
    <scope>NUCLEOTIDE SEQUENCE [LARGE SCALE MRNA] OF 424-563</scope>
    <source>
        <strain>cv. Columbia</strain>
    </source>
</reference>
<reference key="5">
    <citation type="journal article" date="2000" name="J. Mol. Evol.">
        <title>Duplication and quadruplication of Arabidopsis thaliana cysteinyl- and asparaginyl-tRNA synthetase genes of organellar origin.</title>
        <authorList>
            <person name="Peeters N.M."/>
            <person name="Chapron A."/>
            <person name="Giritch A."/>
            <person name="Grandjean O."/>
            <person name="Lancelin D."/>
            <person name="Lhomme T."/>
            <person name="Vivrel A."/>
            <person name="Small I."/>
        </authorList>
    </citation>
    <scope>SUBCELLULAR LOCATION</scope>
</reference>
<reference key="6">
    <citation type="journal article" date="2010" name="Proc. Natl. Acad. Sci. U.S.A.">
        <title>The gametic central cell of Arabidopsis determines the lifespan of adjacent accessory cells.</title>
        <authorList>
            <person name="Kagi C."/>
            <person name="Baumann N."/>
            <person name="Nielsen N."/>
            <person name="Stierhof Y.D."/>
            <person name="Gross-Hardt R."/>
        </authorList>
    </citation>
    <scope>FUNCTION</scope>
    <scope>SUBCELLULAR LOCATION</scope>
    <scope>DISRUPTION PHENOTYPE</scope>
</reference>